<sequence>MQLNSTEISELIKKRIAQFDVVSEAQSTGTIVSVSDGIIRIHGLADVMQGEMIELPGNRYAIALNLERDSVGAVVMGPYADLAEGMSVKCTGRILEVPVGRGLLGRVVNTLGQPIDGKGEIDNDGFSPVEVIAPGVIDRQSVDQPVQTGYKAVDSMVPIGRGQRELIIGDRQTGKTALAIDAIIAQKDSGIKCIYVAIGQKASTIANVVRKLEEHGALANTIVVVASASESAALQYLAPYSGCAMGEYFRDRGEDALIVYDDLSKQAVAYRQISLLLRRPPGREAFPGDVFYLHSRLLERAARVSADYVESFTNGAVKGQTGSLTALPIIETQAGDVSAFVPTNVISITDGQIFLESSLFNSGIRPAVNPGISVSRVGSAAQTKAIKKLSGGIRTALAQYRELAAFAQFASDLDDATRKQLSHGQKVTELLKQKQFAPMPVSEQALVLFAAEFGYLDDVELERIGSFESALLAYANSNHTDFMKNLAKSGDYNDSIKDQLKAIVEDFKKNGAW</sequence>
<organism>
    <name type="scientific">Actinobacillus pleuropneumoniae serotype 7 (strain AP76)</name>
    <dbReference type="NCBI Taxonomy" id="537457"/>
    <lineage>
        <taxon>Bacteria</taxon>
        <taxon>Pseudomonadati</taxon>
        <taxon>Pseudomonadota</taxon>
        <taxon>Gammaproteobacteria</taxon>
        <taxon>Pasteurellales</taxon>
        <taxon>Pasteurellaceae</taxon>
        <taxon>Actinobacillus</taxon>
    </lineage>
</organism>
<reference key="1">
    <citation type="submission" date="2008-06" db="EMBL/GenBank/DDBJ databases">
        <title>Genome and proteome analysis of A. pleuropneumoniae serotype 7.</title>
        <authorList>
            <person name="Linke B."/>
            <person name="Buettner F."/>
            <person name="Martinez-Arias R."/>
            <person name="Goesmann A."/>
            <person name="Baltes N."/>
            <person name="Tegetmeyer H."/>
            <person name="Singh M."/>
            <person name="Gerlach G.F."/>
        </authorList>
    </citation>
    <scope>NUCLEOTIDE SEQUENCE [LARGE SCALE GENOMIC DNA]</scope>
    <source>
        <strain>AP76</strain>
    </source>
</reference>
<evidence type="ECO:0000255" key="1">
    <source>
        <dbReference type="HAMAP-Rule" id="MF_01346"/>
    </source>
</evidence>
<protein>
    <recommendedName>
        <fullName evidence="1">ATP synthase subunit alpha</fullName>
        <ecNumber evidence="1">7.1.2.2</ecNumber>
    </recommendedName>
    <alternativeName>
        <fullName evidence="1">ATP synthase F1 sector subunit alpha</fullName>
    </alternativeName>
    <alternativeName>
        <fullName evidence="1">F-ATPase subunit alpha</fullName>
    </alternativeName>
</protein>
<accession>B3H2P5</accession>
<feature type="chain" id="PRO_1000143334" description="ATP synthase subunit alpha">
    <location>
        <begin position="1"/>
        <end position="513"/>
    </location>
</feature>
<feature type="binding site" evidence="1">
    <location>
        <begin position="169"/>
        <end position="176"/>
    </location>
    <ligand>
        <name>ATP</name>
        <dbReference type="ChEBI" id="CHEBI:30616"/>
    </ligand>
</feature>
<feature type="site" description="Required for activity" evidence="1">
    <location>
        <position position="373"/>
    </location>
</feature>
<keyword id="KW-0066">ATP synthesis</keyword>
<keyword id="KW-0067">ATP-binding</keyword>
<keyword id="KW-0997">Cell inner membrane</keyword>
<keyword id="KW-1003">Cell membrane</keyword>
<keyword id="KW-0139">CF(1)</keyword>
<keyword id="KW-0375">Hydrogen ion transport</keyword>
<keyword id="KW-0406">Ion transport</keyword>
<keyword id="KW-0472">Membrane</keyword>
<keyword id="KW-0547">Nucleotide-binding</keyword>
<keyword id="KW-1278">Translocase</keyword>
<keyword id="KW-0813">Transport</keyword>
<gene>
    <name evidence="1" type="primary">atpA</name>
    <name type="ordered locus">APP7_1710</name>
</gene>
<comment type="function">
    <text evidence="1">Produces ATP from ADP in the presence of a proton gradient across the membrane. The alpha chain is a regulatory subunit.</text>
</comment>
<comment type="catalytic activity">
    <reaction evidence="1">
        <text>ATP + H2O + 4 H(+)(in) = ADP + phosphate + 5 H(+)(out)</text>
        <dbReference type="Rhea" id="RHEA:57720"/>
        <dbReference type="ChEBI" id="CHEBI:15377"/>
        <dbReference type="ChEBI" id="CHEBI:15378"/>
        <dbReference type="ChEBI" id="CHEBI:30616"/>
        <dbReference type="ChEBI" id="CHEBI:43474"/>
        <dbReference type="ChEBI" id="CHEBI:456216"/>
        <dbReference type="EC" id="7.1.2.2"/>
    </reaction>
</comment>
<comment type="subunit">
    <text evidence="1">F-type ATPases have 2 components, CF(1) - the catalytic core - and CF(0) - the membrane proton channel. CF(1) has five subunits: alpha(3), beta(3), gamma(1), delta(1), epsilon(1). CF(0) has three main subunits: a(1), b(2) and c(9-12). The alpha and beta chains form an alternating ring which encloses part of the gamma chain. CF(1) is attached to CF(0) by a central stalk formed by the gamma and epsilon chains, while a peripheral stalk is formed by the delta and b chains.</text>
</comment>
<comment type="subcellular location">
    <subcellularLocation>
        <location evidence="1">Cell inner membrane</location>
        <topology evidence="1">Peripheral membrane protein</topology>
    </subcellularLocation>
</comment>
<comment type="similarity">
    <text evidence="1">Belongs to the ATPase alpha/beta chains family.</text>
</comment>
<dbReference type="EC" id="7.1.2.2" evidence="1"/>
<dbReference type="EMBL" id="CP001091">
    <property type="protein sequence ID" value="ACE62362.1"/>
    <property type="molecule type" value="Genomic_DNA"/>
</dbReference>
<dbReference type="RefSeq" id="WP_005618121.1">
    <property type="nucleotide sequence ID" value="NC_010939.1"/>
</dbReference>
<dbReference type="SMR" id="B3H2P5"/>
<dbReference type="KEGG" id="apa:APP7_1710"/>
<dbReference type="HOGENOM" id="CLU_010091_2_1_6"/>
<dbReference type="Proteomes" id="UP000001226">
    <property type="component" value="Chromosome"/>
</dbReference>
<dbReference type="GO" id="GO:0005886">
    <property type="term" value="C:plasma membrane"/>
    <property type="evidence" value="ECO:0007669"/>
    <property type="project" value="UniProtKB-SubCell"/>
</dbReference>
<dbReference type="GO" id="GO:0045259">
    <property type="term" value="C:proton-transporting ATP synthase complex"/>
    <property type="evidence" value="ECO:0007669"/>
    <property type="project" value="UniProtKB-KW"/>
</dbReference>
<dbReference type="GO" id="GO:0043531">
    <property type="term" value="F:ADP binding"/>
    <property type="evidence" value="ECO:0007669"/>
    <property type="project" value="TreeGrafter"/>
</dbReference>
<dbReference type="GO" id="GO:0005524">
    <property type="term" value="F:ATP binding"/>
    <property type="evidence" value="ECO:0007669"/>
    <property type="project" value="UniProtKB-UniRule"/>
</dbReference>
<dbReference type="GO" id="GO:0046933">
    <property type="term" value="F:proton-transporting ATP synthase activity, rotational mechanism"/>
    <property type="evidence" value="ECO:0007669"/>
    <property type="project" value="UniProtKB-UniRule"/>
</dbReference>
<dbReference type="CDD" id="cd18113">
    <property type="entry name" value="ATP-synt_F1_alpha_C"/>
    <property type="match status" value="1"/>
</dbReference>
<dbReference type="CDD" id="cd18116">
    <property type="entry name" value="ATP-synt_F1_alpha_N"/>
    <property type="match status" value="1"/>
</dbReference>
<dbReference type="CDD" id="cd01132">
    <property type="entry name" value="F1-ATPase_alpha_CD"/>
    <property type="match status" value="1"/>
</dbReference>
<dbReference type="FunFam" id="1.20.150.20:FF:000001">
    <property type="entry name" value="ATP synthase subunit alpha"/>
    <property type="match status" value="1"/>
</dbReference>
<dbReference type="FunFam" id="2.40.30.20:FF:000001">
    <property type="entry name" value="ATP synthase subunit alpha"/>
    <property type="match status" value="1"/>
</dbReference>
<dbReference type="FunFam" id="3.40.50.300:FF:000002">
    <property type="entry name" value="ATP synthase subunit alpha"/>
    <property type="match status" value="1"/>
</dbReference>
<dbReference type="Gene3D" id="2.40.30.20">
    <property type="match status" value="1"/>
</dbReference>
<dbReference type="Gene3D" id="1.20.150.20">
    <property type="entry name" value="ATP synthase alpha/beta chain, C-terminal domain"/>
    <property type="match status" value="1"/>
</dbReference>
<dbReference type="Gene3D" id="3.40.50.300">
    <property type="entry name" value="P-loop containing nucleotide triphosphate hydrolases"/>
    <property type="match status" value="1"/>
</dbReference>
<dbReference type="HAMAP" id="MF_01346">
    <property type="entry name" value="ATP_synth_alpha_bact"/>
    <property type="match status" value="1"/>
</dbReference>
<dbReference type="InterPro" id="IPR023366">
    <property type="entry name" value="ATP_synth_asu-like_sf"/>
</dbReference>
<dbReference type="InterPro" id="IPR000793">
    <property type="entry name" value="ATP_synth_asu_C"/>
</dbReference>
<dbReference type="InterPro" id="IPR038376">
    <property type="entry name" value="ATP_synth_asu_C_sf"/>
</dbReference>
<dbReference type="InterPro" id="IPR033732">
    <property type="entry name" value="ATP_synth_F1_a_nt-bd_dom"/>
</dbReference>
<dbReference type="InterPro" id="IPR005294">
    <property type="entry name" value="ATP_synth_F1_asu"/>
</dbReference>
<dbReference type="InterPro" id="IPR020003">
    <property type="entry name" value="ATPase_a/bsu_AS"/>
</dbReference>
<dbReference type="InterPro" id="IPR004100">
    <property type="entry name" value="ATPase_F1/V1/A1_a/bsu_N"/>
</dbReference>
<dbReference type="InterPro" id="IPR036121">
    <property type="entry name" value="ATPase_F1/V1/A1_a/bsu_N_sf"/>
</dbReference>
<dbReference type="InterPro" id="IPR000194">
    <property type="entry name" value="ATPase_F1/V1/A1_a/bsu_nucl-bd"/>
</dbReference>
<dbReference type="InterPro" id="IPR027417">
    <property type="entry name" value="P-loop_NTPase"/>
</dbReference>
<dbReference type="NCBIfam" id="TIGR00962">
    <property type="entry name" value="atpA"/>
    <property type="match status" value="1"/>
</dbReference>
<dbReference type="NCBIfam" id="NF009884">
    <property type="entry name" value="PRK13343.1"/>
    <property type="match status" value="1"/>
</dbReference>
<dbReference type="PANTHER" id="PTHR48082">
    <property type="entry name" value="ATP SYNTHASE SUBUNIT ALPHA, MITOCHONDRIAL"/>
    <property type="match status" value="1"/>
</dbReference>
<dbReference type="PANTHER" id="PTHR48082:SF2">
    <property type="entry name" value="ATP SYNTHASE SUBUNIT ALPHA, MITOCHONDRIAL"/>
    <property type="match status" value="1"/>
</dbReference>
<dbReference type="Pfam" id="PF00006">
    <property type="entry name" value="ATP-synt_ab"/>
    <property type="match status" value="1"/>
</dbReference>
<dbReference type="Pfam" id="PF00306">
    <property type="entry name" value="ATP-synt_ab_C"/>
    <property type="match status" value="1"/>
</dbReference>
<dbReference type="Pfam" id="PF02874">
    <property type="entry name" value="ATP-synt_ab_N"/>
    <property type="match status" value="1"/>
</dbReference>
<dbReference type="PIRSF" id="PIRSF039088">
    <property type="entry name" value="F_ATPase_subunit_alpha"/>
    <property type="match status" value="1"/>
</dbReference>
<dbReference type="SUPFAM" id="SSF47917">
    <property type="entry name" value="C-terminal domain of alpha and beta subunits of F1 ATP synthase"/>
    <property type="match status" value="1"/>
</dbReference>
<dbReference type="SUPFAM" id="SSF50615">
    <property type="entry name" value="N-terminal domain of alpha and beta subunits of F1 ATP synthase"/>
    <property type="match status" value="1"/>
</dbReference>
<dbReference type="SUPFAM" id="SSF52540">
    <property type="entry name" value="P-loop containing nucleoside triphosphate hydrolases"/>
    <property type="match status" value="1"/>
</dbReference>
<dbReference type="PROSITE" id="PS00152">
    <property type="entry name" value="ATPASE_ALPHA_BETA"/>
    <property type="match status" value="1"/>
</dbReference>
<name>ATPA_ACTP7</name>
<proteinExistence type="inferred from homology"/>